<gene>
    <name type="ordered locus">ECU03_1010</name>
</gene>
<accession>Q8SW28</accession>
<name>1433_ENCCU</name>
<proteinExistence type="evidence at protein level"/>
<feature type="chain" id="PRO_0000383111" description="14-3-3 protein homolog">
    <location>
        <begin position="1"/>
        <end position="258"/>
    </location>
</feature>
<reference key="1">
    <citation type="journal article" date="2001" name="Nature">
        <title>Genome sequence and gene compaction of the eukaryote parasite Encephalitozoon cuniculi.</title>
        <authorList>
            <person name="Katinka M.D."/>
            <person name="Duprat S."/>
            <person name="Cornillot E."/>
            <person name="Metenier G."/>
            <person name="Thomarat F."/>
            <person name="Prensier G."/>
            <person name="Barbe V."/>
            <person name="Peyretaillade E."/>
            <person name="Brottier P."/>
            <person name="Wincker P."/>
            <person name="Delbac F."/>
            <person name="El Alaoui H."/>
            <person name="Peyret P."/>
            <person name="Saurin W."/>
            <person name="Gouy M."/>
            <person name="Weissenbach J."/>
            <person name="Vivares C.P."/>
        </authorList>
    </citation>
    <scope>NUCLEOTIDE SEQUENCE [LARGE SCALE GENOMIC DNA]</scope>
    <source>
        <strain>GB-M1</strain>
    </source>
</reference>
<reference key="2">
    <citation type="journal article" date="2006" name="Proteomics">
        <title>Proteomic analysis of the eukaryotic parasite Encephalitozoon cuniculi (microsporidia): a reference map for proteins expressed in late sporogonial stages.</title>
        <authorList>
            <person name="Brosson D."/>
            <person name="Kuhn L."/>
            <person name="Delbac F."/>
            <person name="Garin J."/>
            <person name="Vivares C.P."/>
            <person name="Texier C."/>
        </authorList>
    </citation>
    <scope>IDENTIFICATION BY MASS SPECTROMETRY [LARGE SCALE ANALYSIS]</scope>
    <scope>DEVELOPMENTAL STAGE</scope>
</reference>
<sequence length="258" mass="29642">MASKQYEEALQKANLSDMAERYDDMAKEMRLAVTLAHEDKHILNVMARNLFSVAYKNLVSSRRSSWRMLCSERQKLEGKDPSVVHVINEKIKVVEEELLRFCDEVLDIITTYILSLEEAQKNIEYNIFFLKMKGDYYRYKAEVVTGPEHSEVSKHAAESYKEATEKAKTLPPTNPIKLGLALNYSVFHYEILNDSEKACSIAKGAFDEAIKELDTLSEEHYRDSTLIMQLLRDNLTLWTSREEGNVMGDEGKGDPDEN</sequence>
<evidence type="ECO:0000269" key="1">
    <source>
    </source>
</evidence>
<evidence type="ECO:0000305" key="2"/>
<organism>
    <name type="scientific">Encephalitozoon cuniculi (strain GB-M1)</name>
    <name type="common">Microsporidian parasite</name>
    <dbReference type="NCBI Taxonomy" id="284813"/>
    <lineage>
        <taxon>Eukaryota</taxon>
        <taxon>Fungi</taxon>
        <taxon>Fungi incertae sedis</taxon>
        <taxon>Microsporidia</taxon>
        <taxon>Unikaryonidae</taxon>
        <taxon>Encephalitozoon</taxon>
    </lineage>
</organism>
<protein>
    <recommendedName>
        <fullName>14-3-3 protein homolog</fullName>
    </recommendedName>
</protein>
<comment type="developmental stage">
    <text evidence="1">Expressed in late sporogonial stages.</text>
</comment>
<comment type="similarity">
    <text evidence="2">Belongs to the 14-3-3 family.</text>
</comment>
<keyword id="KW-1185">Reference proteome</keyword>
<dbReference type="EMBL" id="AL590443">
    <property type="protein sequence ID" value="CAD26245.1"/>
    <property type="molecule type" value="Genomic_DNA"/>
</dbReference>
<dbReference type="RefSeq" id="NP_597610.1">
    <property type="nucleotide sequence ID" value="NM_001040974.1"/>
</dbReference>
<dbReference type="SMR" id="Q8SW28"/>
<dbReference type="FunCoup" id="Q8SW28">
    <property type="interactions" value="165"/>
</dbReference>
<dbReference type="STRING" id="284813.Q8SW28"/>
<dbReference type="GeneID" id="858772"/>
<dbReference type="KEGG" id="ecu:ECU03_1010"/>
<dbReference type="VEuPathDB" id="MicrosporidiaDB:ECU03_1010"/>
<dbReference type="HOGENOM" id="CLU_058290_0_1_1"/>
<dbReference type="InParanoid" id="Q8SW28"/>
<dbReference type="OMA" id="SKGTDKH"/>
<dbReference type="OrthoDB" id="10260625at2759"/>
<dbReference type="Proteomes" id="UP000000819">
    <property type="component" value="Chromosome III"/>
</dbReference>
<dbReference type="CDD" id="cd08774">
    <property type="entry name" value="14-3-3"/>
    <property type="match status" value="1"/>
</dbReference>
<dbReference type="Gene3D" id="1.20.190.20">
    <property type="entry name" value="14-3-3 domain"/>
    <property type="match status" value="1"/>
</dbReference>
<dbReference type="InterPro" id="IPR000308">
    <property type="entry name" value="14-3-3"/>
</dbReference>
<dbReference type="InterPro" id="IPR036815">
    <property type="entry name" value="14-3-3_dom_sf"/>
</dbReference>
<dbReference type="InterPro" id="IPR023410">
    <property type="entry name" value="14-3-3_domain"/>
</dbReference>
<dbReference type="PANTHER" id="PTHR18860">
    <property type="entry name" value="14-3-3 PROTEIN"/>
    <property type="match status" value="1"/>
</dbReference>
<dbReference type="Pfam" id="PF00244">
    <property type="entry name" value="14-3-3"/>
    <property type="match status" value="1"/>
</dbReference>
<dbReference type="PIRSF" id="PIRSF000868">
    <property type="entry name" value="14-3-3"/>
    <property type="match status" value="1"/>
</dbReference>
<dbReference type="PRINTS" id="PR00305">
    <property type="entry name" value="1433ZETA"/>
</dbReference>
<dbReference type="SMART" id="SM00101">
    <property type="entry name" value="14_3_3"/>
    <property type="match status" value="1"/>
</dbReference>
<dbReference type="SUPFAM" id="SSF48445">
    <property type="entry name" value="14-3-3 protein"/>
    <property type="match status" value="1"/>
</dbReference>